<protein>
    <recommendedName>
        <fullName evidence="1">Nucleoid-associated protein TM_0687</fullName>
    </recommendedName>
</protein>
<sequence length="118" mass="13394">MKKIKSFGGKSLGGGKQEKILKDFARMQEELQKKIQELEESFSQIEVEASVGGGAVRIVATCDRRVKDIEIDEDLKEDFDTLKDLLIAGMNEVMEKIEKRREEEMSKITQQFGIPGLM</sequence>
<evidence type="ECO:0000255" key="1">
    <source>
        <dbReference type="HAMAP-Rule" id="MF_00274"/>
    </source>
</evidence>
<comment type="function">
    <text evidence="1">Binds to DNA and alters its conformation. May be involved in regulation of gene expression, nucleoid organization and DNA protection.</text>
</comment>
<comment type="subunit">
    <text evidence="1">Homodimer.</text>
</comment>
<comment type="subcellular location">
    <subcellularLocation>
        <location evidence="1">Cytoplasm</location>
        <location evidence="1">Nucleoid</location>
    </subcellularLocation>
</comment>
<comment type="similarity">
    <text evidence="1">Belongs to the YbaB/EbfC family.</text>
</comment>
<gene>
    <name type="ordered locus">TM_0687</name>
</gene>
<feature type="chain" id="PRO_0000170458" description="Nucleoid-associated protein TM_0687">
    <location>
        <begin position="1"/>
        <end position="118"/>
    </location>
</feature>
<organism>
    <name type="scientific">Thermotoga maritima (strain ATCC 43589 / DSM 3109 / JCM 10099 / NBRC 100826 / MSB8)</name>
    <dbReference type="NCBI Taxonomy" id="243274"/>
    <lineage>
        <taxon>Bacteria</taxon>
        <taxon>Thermotogati</taxon>
        <taxon>Thermotogota</taxon>
        <taxon>Thermotogae</taxon>
        <taxon>Thermotogales</taxon>
        <taxon>Thermotogaceae</taxon>
        <taxon>Thermotoga</taxon>
    </lineage>
</organism>
<name>Y687_THEMA</name>
<proteinExistence type="inferred from homology"/>
<dbReference type="EMBL" id="AE000512">
    <property type="protein sequence ID" value="AAD35769.1"/>
    <property type="molecule type" value="Genomic_DNA"/>
</dbReference>
<dbReference type="PIR" id="E72344">
    <property type="entry name" value="E72344"/>
</dbReference>
<dbReference type="RefSeq" id="NP_228496.1">
    <property type="nucleotide sequence ID" value="NC_000853.1"/>
</dbReference>
<dbReference type="RefSeq" id="WP_004081076.1">
    <property type="nucleotide sequence ID" value="NZ_CP011107.1"/>
</dbReference>
<dbReference type="SMR" id="Q9WZF3"/>
<dbReference type="FunCoup" id="Q9WZF3">
    <property type="interactions" value="205"/>
</dbReference>
<dbReference type="STRING" id="243274.TM_0687"/>
<dbReference type="PaxDb" id="243274-THEMA_01230"/>
<dbReference type="EnsemblBacteria" id="AAD35769">
    <property type="protein sequence ID" value="AAD35769"/>
    <property type="gene ID" value="TM_0687"/>
</dbReference>
<dbReference type="KEGG" id="tma:TM0687"/>
<dbReference type="KEGG" id="tmi:THEMA_01230"/>
<dbReference type="KEGG" id="tmm:Tmari_0687"/>
<dbReference type="KEGG" id="tmw:THMA_0702"/>
<dbReference type="eggNOG" id="COG0718">
    <property type="taxonomic scope" value="Bacteria"/>
</dbReference>
<dbReference type="InParanoid" id="Q9WZF3"/>
<dbReference type="Proteomes" id="UP000008183">
    <property type="component" value="Chromosome"/>
</dbReference>
<dbReference type="GO" id="GO:0043590">
    <property type="term" value="C:bacterial nucleoid"/>
    <property type="evidence" value="ECO:0007669"/>
    <property type="project" value="UniProtKB-UniRule"/>
</dbReference>
<dbReference type="GO" id="GO:0005829">
    <property type="term" value="C:cytosol"/>
    <property type="evidence" value="ECO:0000318"/>
    <property type="project" value="GO_Central"/>
</dbReference>
<dbReference type="GO" id="GO:0003677">
    <property type="term" value="F:DNA binding"/>
    <property type="evidence" value="ECO:0000318"/>
    <property type="project" value="GO_Central"/>
</dbReference>
<dbReference type="FunFam" id="3.30.1310.10:FF:000012">
    <property type="entry name" value="Nucleoid-associated protein Tpet_0244"/>
    <property type="match status" value="1"/>
</dbReference>
<dbReference type="Gene3D" id="3.30.1310.10">
    <property type="entry name" value="Nucleoid-associated protein YbaB-like domain"/>
    <property type="match status" value="1"/>
</dbReference>
<dbReference type="HAMAP" id="MF_00274">
    <property type="entry name" value="DNA_YbaB_EbfC"/>
    <property type="match status" value="1"/>
</dbReference>
<dbReference type="InterPro" id="IPR036894">
    <property type="entry name" value="YbaB-like_sf"/>
</dbReference>
<dbReference type="InterPro" id="IPR004401">
    <property type="entry name" value="YbaB/EbfC"/>
</dbReference>
<dbReference type="NCBIfam" id="TIGR00103">
    <property type="entry name" value="DNA_YbaB_EbfC"/>
    <property type="match status" value="1"/>
</dbReference>
<dbReference type="PANTHER" id="PTHR33449">
    <property type="entry name" value="NUCLEOID-ASSOCIATED PROTEIN YBAB"/>
    <property type="match status" value="1"/>
</dbReference>
<dbReference type="PANTHER" id="PTHR33449:SF1">
    <property type="entry name" value="NUCLEOID-ASSOCIATED PROTEIN YBAB"/>
    <property type="match status" value="1"/>
</dbReference>
<dbReference type="Pfam" id="PF02575">
    <property type="entry name" value="YbaB_DNA_bd"/>
    <property type="match status" value="1"/>
</dbReference>
<dbReference type="PIRSF" id="PIRSF004555">
    <property type="entry name" value="UCP004555"/>
    <property type="match status" value="1"/>
</dbReference>
<dbReference type="SUPFAM" id="SSF82607">
    <property type="entry name" value="YbaB-like"/>
    <property type="match status" value="1"/>
</dbReference>
<reference key="1">
    <citation type="journal article" date="1999" name="Nature">
        <title>Evidence for lateral gene transfer between Archaea and Bacteria from genome sequence of Thermotoga maritima.</title>
        <authorList>
            <person name="Nelson K.E."/>
            <person name="Clayton R.A."/>
            <person name="Gill S.R."/>
            <person name="Gwinn M.L."/>
            <person name="Dodson R.J."/>
            <person name="Haft D.H."/>
            <person name="Hickey E.K."/>
            <person name="Peterson J.D."/>
            <person name="Nelson W.C."/>
            <person name="Ketchum K.A."/>
            <person name="McDonald L.A."/>
            <person name="Utterback T.R."/>
            <person name="Malek J.A."/>
            <person name="Linher K.D."/>
            <person name="Garrett M.M."/>
            <person name="Stewart A.M."/>
            <person name="Cotton M.D."/>
            <person name="Pratt M.S."/>
            <person name="Phillips C.A."/>
            <person name="Richardson D.L."/>
            <person name="Heidelberg J.F."/>
            <person name="Sutton G.G."/>
            <person name="Fleischmann R.D."/>
            <person name="Eisen J.A."/>
            <person name="White O."/>
            <person name="Salzberg S.L."/>
            <person name="Smith H.O."/>
            <person name="Venter J.C."/>
            <person name="Fraser C.M."/>
        </authorList>
    </citation>
    <scope>NUCLEOTIDE SEQUENCE [LARGE SCALE GENOMIC DNA]</scope>
    <source>
        <strain>ATCC 43589 / DSM 3109 / JCM 10099 / NBRC 100826 / MSB8</strain>
    </source>
</reference>
<accession>Q9WZF3</accession>
<keyword id="KW-0963">Cytoplasm</keyword>
<keyword id="KW-0238">DNA-binding</keyword>
<keyword id="KW-1185">Reference proteome</keyword>